<dbReference type="EMBL" id="EU262890">
    <property type="protein sequence ID" value="ABX10059.1"/>
    <property type="molecule type" value="Genomic_DNA"/>
</dbReference>
<dbReference type="RefSeq" id="YP_001687305.1">
    <property type="nucleotide sequence ID" value="NC_010360.2"/>
</dbReference>
<dbReference type="SMR" id="B0Z566"/>
<dbReference type="GeneID" id="5955343"/>
<dbReference type="GO" id="GO:0009507">
    <property type="term" value="C:chloroplast"/>
    <property type="evidence" value="ECO:0007669"/>
    <property type="project" value="UniProtKB-SubCell"/>
</dbReference>
<dbReference type="GO" id="GO:0005763">
    <property type="term" value="C:mitochondrial small ribosomal subunit"/>
    <property type="evidence" value="ECO:0007669"/>
    <property type="project" value="TreeGrafter"/>
</dbReference>
<dbReference type="GO" id="GO:0070181">
    <property type="term" value="F:small ribosomal subunit rRNA binding"/>
    <property type="evidence" value="ECO:0007669"/>
    <property type="project" value="TreeGrafter"/>
</dbReference>
<dbReference type="GO" id="GO:0003735">
    <property type="term" value="F:structural constituent of ribosome"/>
    <property type="evidence" value="ECO:0007669"/>
    <property type="project" value="InterPro"/>
</dbReference>
<dbReference type="GO" id="GO:0006412">
    <property type="term" value="P:translation"/>
    <property type="evidence" value="ECO:0007669"/>
    <property type="project" value="UniProtKB-UniRule"/>
</dbReference>
<dbReference type="FunFam" id="4.10.640.10:FF:000002">
    <property type="entry name" value="30S ribosomal protein S18, chloroplastic"/>
    <property type="match status" value="1"/>
</dbReference>
<dbReference type="Gene3D" id="4.10.640.10">
    <property type="entry name" value="Ribosomal protein S18"/>
    <property type="match status" value="1"/>
</dbReference>
<dbReference type="HAMAP" id="MF_00270">
    <property type="entry name" value="Ribosomal_bS18"/>
    <property type="match status" value="1"/>
</dbReference>
<dbReference type="InterPro" id="IPR001648">
    <property type="entry name" value="Ribosomal_bS18"/>
</dbReference>
<dbReference type="InterPro" id="IPR036870">
    <property type="entry name" value="Ribosomal_bS18_sf"/>
</dbReference>
<dbReference type="NCBIfam" id="TIGR00165">
    <property type="entry name" value="S18"/>
    <property type="match status" value="1"/>
</dbReference>
<dbReference type="PANTHER" id="PTHR13479">
    <property type="entry name" value="30S RIBOSOMAL PROTEIN S18"/>
    <property type="match status" value="1"/>
</dbReference>
<dbReference type="PANTHER" id="PTHR13479:SF40">
    <property type="entry name" value="SMALL RIBOSOMAL SUBUNIT PROTEIN BS18M"/>
    <property type="match status" value="1"/>
</dbReference>
<dbReference type="Pfam" id="PF01084">
    <property type="entry name" value="Ribosomal_S18"/>
    <property type="match status" value="1"/>
</dbReference>
<dbReference type="PRINTS" id="PR00974">
    <property type="entry name" value="RIBOSOMALS18"/>
</dbReference>
<dbReference type="SUPFAM" id="SSF46911">
    <property type="entry name" value="Ribosomal protein S18"/>
    <property type="match status" value="1"/>
</dbReference>
<comment type="subunit">
    <text evidence="1">Part of the 30S ribosomal subunit.</text>
</comment>
<comment type="subcellular location">
    <subcellularLocation>
        <location>Plastid</location>
        <location>Chloroplast</location>
    </subcellularLocation>
</comment>
<comment type="similarity">
    <text evidence="1">Belongs to the bacterial ribosomal protein bS18 family.</text>
</comment>
<reference key="1">
    <citation type="journal article" date="2008" name="Nucleic Acids Res.">
        <title>The complete nucleotide sequences of the five genetically distinct plastid genomes of Oenothera, subsection Oenothera: I. Sequence evaluation and plastome evolution.</title>
        <authorList>
            <person name="Greiner S."/>
            <person name="Wang X."/>
            <person name="Rauwolf U."/>
            <person name="Silber M.V."/>
            <person name="Mayer K."/>
            <person name="Meurer J."/>
            <person name="Haberer G."/>
            <person name="Herrmann R.G."/>
        </authorList>
    </citation>
    <scope>NUCLEOTIDE SEQUENCE [LARGE SCALE GENOMIC DNA]</scope>
    <source>
        <strain>cv. Rr-lamarckiana Sweden</strain>
    </source>
</reference>
<gene>
    <name evidence="1" type="primary">rps18</name>
</gene>
<sequence length="97" mass="11610">MDKSKRLFLKSKRSFRRRLPPIQSGDRIDYRNISLISRFISQQGKILSRRVNRLTLKQQRLITIAIKQARILSLLPFRPKAQRFKKAQRFKRSQSTV</sequence>
<name>RR18_OENGL</name>
<feature type="chain" id="PRO_0000345600" description="Small ribosomal subunit protein bS18c">
    <location>
        <begin position="1"/>
        <end position="97"/>
    </location>
</feature>
<accession>B0Z566</accession>
<evidence type="ECO:0000255" key="1">
    <source>
        <dbReference type="HAMAP-Rule" id="MF_00270"/>
    </source>
</evidence>
<evidence type="ECO:0000305" key="2"/>
<keyword id="KW-0150">Chloroplast</keyword>
<keyword id="KW-0934">Plastid</keyword>
<keyword id="KW-0687">Ribonucleoprotein</keyword>
<keyword id="KW-0689">Ribosomal protein</keyword>
<keyword id="KW-0694">RNA-binding</keyword>
<keyword id="KW-0699">rRNA-binding</keyword>
<protein>
    <recommendedName>
        <fullName evidence="1">Small ribosomal subunit protein bS18c</fullName>
    </recommendedName>
    <alternativeName>
        <fullName evidence="2">30S ribosomal protein S18, chloroplastic</fullName>
    </alternativeName>
</protein>
<organism>
    <name type="scientific">Oenothera glazioviana</name>
    <name type="common">Large-flowered evening primrose</name>
    <name type="synonym">Oenothera erythrosepala</name>
    <dbReference type="NCBI Taxonomy" id="482428"/>
    <lineage>
        <taxon>Eukaryota</taxon>
        <taxon>Viridiplantae</taxon>
        <taxon>Streptophyta</taxon>
        <taxon>Embryophyta</taxon>
        <taxon>Tracheophyta</taxon>
        <taxon>Spermatophyta</taxon>
        <taxon>Magnoliopsida</taxon>
        <taxon>eudicotyledons</taxon>
        <taxon>Gunneridae</taxon>
        <taxon>Pentapetalae</taxon>
        <taxon>rosids</taxon>
        <taxon>malvids</taxon>
        <taxon>Myrtales</taxon>
        <taxon>Onagraceae</taxon>
        <taxon>Onagroideae</taxon>
        <taxon>Onagreae</taxon>
        <taxon>Oenothera</taxon>
    </lineage>
</organism>
<proteinExistence type="inferred from homology"/>
<geneLocation type="chloroplast"/>